<feature type="chain" id="PRO_0000094880" description="Tyrosine-protein phosphatase cdc-14">
    <location>
        <begin position="1"/>
        <end position="709"/>
    </location>
</feature>
<feature type="domain" description="Tyrosine-protein phosphatase" evidence="1">
    <location>
        <begin position="196"/>
        <end position="354"/>
    </location>
</feature>
<feature type="region of interest" description="Disordered" evidence="3">
    <location>
        <begin position="403"/>
        <end position="541"/>
    </location>
</feature>
<feature type="region of interest" description="Disordered" evidence="3">
    <location>
        <begin position="573"/>
        <end position="594"/>
    </location>
</feature>
<feature type="region of interest" description="Disordered" evidence="3">
    <location>
        <begin position="628"/>
        <end position="661"/>
    </location>
</feature>
<feature type="short sequence motif" description="Nuclear localization signal" evidence="6">
    <location>
        <begin position="366"/>
        <end position="371"/>
    </location>
</feature>
<feature type="short sequence motif" description="Nuclear export signal" evidence="6">
    <location>
        <begin position="372"/>
        <end position="381"/>
    </location>
</feature>
<feature type="compositionally biased region" description="Polar residues" evidence="3">
    <location>
        <begin position="404"/>
        <end position="413"/>
    </location>
</feature>
<feature type="compositionally biased region" description="Low complexity" evidence="3">
    <location>
        <begin position="463"/>
        <end position="479"/>
    </location>
</feature>
<feature type="compositionally biased region" description="Polar residues" evidence="3">
    <location>
        <begin position="480"/>
        <end position="490"/>
    </location>
</feature>
<feature type="compositionally biased region" description="Polar residues" evidence="3">
    <location>
        <begin position="501"/>
        <end position="521"/>
    </location>
</feature>
<feature type="compositionally biased region" description="Low complexity" evidence="3">
    <location>
        <begin position="526"/>
        <end position="541"/>
    </location>
</feature>
<feature type="compositionally biased region" description="Polar residues" evidence="3">
    <location>
        <begin position="639"/>
        <end position="649"/>
    </location>
</feature>
<feature type="active site" description="Phosphocysteine intermediate" evidence="1">
    <location>
        <position position="295"/>
    </location>
</feature>
<feature type="splice variant" id="VSP_059807" description="In isoform a, isoform c and isoform d." evidence="9">
    <location>
        <begin position="542"/>
        <end position="555"/>
    </location>
</feature>
<feature type="splice variant" id="VSP_059808" description="In isoform c." evidence="9">
    <original>ITKCSLTAESKPPKRILSMPGTSKSTSSLKKIQVSRPRPYPSTGVRVELCANGKSYDIRPRKEAHVIPGAGLAANTEALLGVCKLVNTLS</original>
    <variation>FGLVRVPPDSPHSIMAHRPPPTTSSRAPLSPHNYSTTQGYSTSSRGLYGDKKPLARGSVSTSTLPSMYMTRSCERK</variation>
    <location>
        <begin position="620"/>
        <end position="709"/>
    </location>
</feature>
<feature type="splice variant" id="VSP_059809" description="In isoform g." evidence="9">
    <original>ITKCSLTAESKPPKRILSMPGTSKSTSSLKKIQVSRPRPYPSTGVRVELCANGKSYDIRPRKEAHVIPGAGLAANT</original>
    <variation>FGLVRVPPDSPHSIMAHRPPPTTSSRAPLSPHNYSTTQGYSTSSRGLYGDKKPLARGSVSTSTLPSMYMTRSCERK</variation>
    <location>
        <begin position="620"/>
        <end position="695"/>
    </location>
</feature>
<feature type="splice variant" id="VSP_059810" description="In isoform g." evidence="9">
    <location>
        <begin position="696"/>
        <end position="709"/>
    </location>
</feature>
<feature type="splice variant" id="VSP_059811" description="In isoform a and isoform e." evidence="9">
    <original>VCKLVNTL</original>
    <variation>KRRKTA</variation>
    <location>
        <begin position="701"/>
        <end position="708"/>
    </location>
</feature>
<feature type="mutagenesis site" description="Abolishes phosphatase activity." evidence="4">
    <original>C</original>
    <variation>S</variation>
    <location>
        <position position="295"/>
    </location>
</feature>
<feature type="mutagenesis site" description="Disrupts nuclear localization. Localizes to the cytoplasm; when associated with 372-A--A-381." evidence="6">
    <original>KRNVRR</original>
    <variation>AANVAA</variation>
    <location>
        <begin position="366"/>
        <end position="371"/>
    </location>
</feature>
<feature type="mutagenesis site" description="Impairs nuclear export signal. Disrupts cytoplasmic localization, conferring nuclear localization during interphase. Localizes to the cytoplasm; when associated with 366-A--A-371." evidence="6">
    <original>LVNQVDDINL</original>
    <variation>AVNQVDDANA</variation>
    <location>
        <begin position="372"/>
        <end position="381"/>
    </location>
</feature>
<feature type="mutagenesis site" description="In he118; no effect on viability, embryogenesis or fertility. Disrupts cell cycle arrest of vulval precursor, intestinal, and hypodermal cells, and of precursor cells that give rise to male specific structures during postembryonic development. Vulval precursor cells undergo an extra round of cell division during the L2 larval stage of development, but the additional precursor cells do not disrupt formation of the vulval structure and animals undergo normal vulval morphogenesis during the L4 larval stage. Does not result in defects in cytokinesis. Overexpression of the cyclin dependent kinase inhibitor cki-1, or knockout with the G1/S-specific cyclin-E cye-1 (eh10), rescues the cell division phenotype." evidence="5">
    <location>
        <begin position="446"/>
        <end position="709"/>
    </location>
</feature>
<keyword id="KW-0025">Alternative splicing</keyword>
<keyword id="KW-0131">Cell cycle</keyword>
<keyword id="KW-0132">Cell division</keyword>
<keyword id="KW-0963">Cytoplasm</keyword>
<keyword id="KW-0206">Cytoskeleton</keyword>
<keyword id="KW-0378">Hydrolase</keyword>
<keyword id="KW-0493">Microtubule</keyword>
<keyword id="KW-0539">Nucleus</keyword>
<keyword id="KW-0904">Protein phosphatase</keyword>
<keyword id="KW-1185">Reference proteome</keyword>
<proteinExistence type="evidence at protein level"/>
<reference key="1">
    <citation type="journal article" date="2004" name="Nat. Cell Biol.">
        <title>The CDC-14 phosphatase controls developmental cell-cycle arrest in C. elegans.</title>
        <authorList>
            <person name="Saito R.M."/>
            <person name="Perreault A."/>
            <person name="Peach B."/>
            <person name="Satterlee J.S."/>
            <person name="van den Heuvel S."/>
        </authorList>
    </citation>
    <scope>NUCLEOTIDE SEQUENCE [MRNA] (ISOFORMS A; C; D AND E)</scope>
    <scope>FUNCTION</scope>
    <scope>SUBCELLULAR LOCATION</scope>
    <scope>DISRUPTION PHENOTYPE</scope>
    <scope>MUTAGENESIS OF 446-GLN--SER-709</scope>
</reference>
<reference evidence="9" key="2">
    <citation type="submission" date="1997-04" db="EMBL/GenBank/DDBJ databases">
        <authorList>
            <person name="Ernsting B.R."/>
            <person name="Li L."/>
            <person name="Wishart M.J."/>
            <person name="Dixon J.E."/>
        </authorList>
    </citation>
    <scope>NUCLEOTIDE SEQUENCE [MRNA] (ISOFORM C)</scope>
</reference>
<reference key="3">
    <citation type="journal article" date="1998" name="Science">
        <title>Genome sequence of the nematode C. elegans: a platform for investigating biology.</title>
        <authorList>
            <consortium name="The C. elegans sequencing consortium"/>
        </authorList>
    </citation>
    <scope>NUCLEOTIDE SEQUENCE [LARGE SCALE GENOMIC DNA]</scope>
    <source>
        <strain>Bristol N2</strain>
    </source>
</reference>
<reference key="4">
    <citation type="journal article" date="2002" name="J. Cell Biol.">
        <title>The CeCDC-14 phosphatase is required for cytokinesis in the Caenorhabditis elegans embryo.</title>
        <authorList>
            <person name="Gruneberg U."/>
            <person name="Glotzer M."/>
            <person name="Gartner A."/>
            <person name="Nigg E.A."/>
        </authorList>
    </citation>
    <scope>FUNCTION</scope>
    <scope>CATALYTIC ACTIVITY</scope>
    <scope>ACTIVITY REGULATION</scope>
    <scope>SUBCELLULAR LOCATION</scope>
    <scope>DISRUPTION PHENOTYPE</scope>
    <scope>MUTAGENESIS OF CYS-295</scope>
</reference>
<reference key="5">
    <citation type="journal article" date="2011" name="Mech. Dev.">
        <title>Control of Cdc14 activity coordinates cell cycle and development in Caenorhabditis elegans.</title>
        <authorList>
            <person name="Roy S.H."/>
            <person name="Clayton J.E."/>
            <person name="Holmen J."/>
            <person name="Beltz E."/>
            <person name="Saito R.M."/>
        </authorList>
    </citation>
    <scope>FUNCTION</scope>
    <scope>SUBCELLULAR LOCATION (ISOFORM C)</scope>
    <scope>DEVELOPMENTAL STAGE</scope>
    <scope>DISRUPTION PHENOTYPE</scope>
    <scope>NUCLEAR EXPORT SIGNAL</scope>
    <scope>NUCLEAR LOCALIZATION SIGNAL</scope>
    <scope>MUTAGENESIS OF 366-LYS--ARG-371 AND 372-LEU--LEU-381</scope>
</reference>
<organism>
    <name type="scientific">Caenorhabditis elegans</name>
    <dbReference type="NCBI Taxonomy" id="6239"/>
    <lineage>
        <taxon>Eukaryota</taxon>
        <taxon>Metazoa</taxon>
        <taxon>Ecdysozoa</taxon>
        <taxon>Nematoda</taxon>
        <taxon>Chromadorea</taxon>
        <taxon>Rhabditida</taxon>
        <taxon>Rhabditina</taxon>
        <taxon>Rhabditomorpha</taxon>
        <taxon>Rhabditoidea</taxon>
        <taxon>Rhabditidae</taxon>
        <taxon>Peloderinae</taxon>
        <taxon>Caenorhabditis</taxon>
    </lineage>
</organism>
<name>CDC14_CAEEL</name>
<protein>
    <recommendedName>
        <fullName>Tyrosine-protein phosphatase cdc-14</fullName>
        <ecNumber evidence="2 4">3.1.3.48</ecNumber>
    </recommendedName>
    <alternativeName>
        <fullName>Cell division cycle-related protein 14</fullName>
    </alternativeName>
</protein>
<sequence>MREDHSPRRNNTIENTLTELLPNRLYFGCFPNPDAIDKSDKSVKKTCFININNKFHYEPFYEDFGPWNLSVLYRLCVQVGKLLEVEEKRSRRVVLFCQDDGTGQYDKIRVNTAYVLGAYLIIYQGFSADDAYLKVSSGETVKFVGFRDASMGSPQYLLHLHDVLRGIEKALKFGWLDFSDFDYEEYEFYERVENGDFNWIIPGKILSFCGPHNESREENGYPYHAPDVYFDYFRENKVSTIVRLNAKNYDASKFTKAGFDHVDLFFIDGSTPSDEIMLKFIKVVDNTKGGVAVHCKAGLGRTGTLIACWMMKEYGLTAGECMGWLRVCRPGSVIGPQQPYLIEKQKFCWSLSQSNGVHLTQNKEEKRNVRRLVNQVDDINLGEERISPKSRENTRPNILRRRVQVQNGRSTAPVTIAPAGTSESRRSTKPSRVVDETALDDQGRSQGDRLLQLKAKHQHESETTSPNSSSSRRFVKSSTPQMTVPSQAYLNRNREPIIVTPSKNGTSSGTSSRQLKTTPNGNVAYRTRNSSGNTTSTLTRTGNESYRFHNSLFYEPASAVFPSMASRRSETTRYLSPTTPIKPMSPSYTDGTSPRYKARLRSENPIGSTTSTPFSLQPQITKCSLTAESKPPKRILSMPGTSKSTSSLKKIQVSRPRPYPSTGVRVELCANGKSYDIRPRKEAHVIPGAGLAANTEALLGVCKLVNTLS</sequence>
<gene>
    <name evidence="7 8 15" type="primary">cdc-14</name>
    <name evidence="15" type="ORF">C17G10.4</name>
</gene>
<dbReference type="EC" id="3.1.3.48" evidence="2 4"/>
<dbReference type="EMBL" id="AY661743">
    <property type="protein sequence ID" value="AAT74542.1"/>
    <property type="molecule type" value="mRNA"/>
</dbReference>
<dbReference type="EMBL" id="AY661744">
    <property type="protein sequence ID" value="AAT74543.1"/>
    <property type="status" value="ALT_SEQ"/>
    <property type="molecule type" value="mRNA"/>
</dbReference>
<dbReference type="EMBL" id="AY661745">
    <property type="protein sequence ID" value="AAT74544.1"/>
    <property type="molecule type" value="mRNA"/>
</dbReference>
<dbReference type="EMBL" id="AY661746">
    <property type="protein sequence ID" value="AAT74545.1"/>
    <property type="molecule type" value="mRNA"/>
</dbReference>
<dbReference type="EMBL" id="AY661747">
    <property type="protein sequence ID" value="AAT74546.1"/>
    <property type="molecule type" value="mRNA"/>
</dbReference>
<dbReference type="EMBL" id="AF000363">
    <property type="protein sequence ID" value="AAB94407.1"/>
    <property type="molecule type" value="mRNA"/>
</dbReference>
<dbReference type="EMBL" id="BX284602">
    <property type="protein sequence ID" value="CCD64951.1"/>
    <property type="molecule type" value="Genomic_DNA"/>
</dbReference>
<dbReference type="EMBL" id="BX284602">
    <property type="protein sequence ID" value="CCD64953.1"/>
    <property type="molecule type" value="Genomic_DNA"/>
</dbReference>
<dbReference type="EMBL" id="BX284602">
    <property type="protein sequence ID" value="CCD64954.1"/>
    <property type="molecule type" value="Genomic_DNA"/>
</dbReference>
<dbReference type="EMBL" id="BX284602">
    <property type="protein sequence ID" value="CCD64955.1"/>
    <property type="molecule type" value="Genomic_DNA"/>
</dbReference>
<dbReference type="EMBL" id="BX284602">
    <property type="protein sequence ID" value="CTQ86448.1"/>
    <property type="molecule type" value="Genomic_DNA"/>
</dbReference>
<dbReference type="EMBL" id="BX284602">
    <property type="protein sequence ID" value="CTQ86449.1"/>
    <property type="molecule type" value="Genomic_DNA"/>
</dbReference>
<dbReference type="PIR" id="E88158">
    <property type="entry name" value="E88158"/>
</dbReference>
<dbReference type="PIR" id="T34097">
    <property type="entry name" value="T34097"/>
</dbReference>
<dbReference type="RefSeq" id="NP_001021969.1">
    <molecule id="P81299-5"/>
    <property type="nucleotide sequence ID" value="NM_001026798.8"/>
</dbReference>
<dbReference type="RefSeq" id="NP_001300509.1">
    <property type="nucleotide sequence ID" value="NM_001313580.1"/>
</dbReference>
<dbReference type="RefSeq" id="NP_001300510.1">
    <molecule id="P81299-1"/>
    <property type="nucleotide sequence ID" value="NM_001313581.4"/>
</dbReference>
<dbReference type="RefSeq" id="NP_001367521.1">
    <molecule id="P81299-3"/>
    <property type="nucleotide sequence ID" value="NM_001381422.2"/>
</dbReference>
<dbReference type="RefSeq" id="NP_001368512.1">
    <molecule id="P81299-7"/>
    <property type="nucleotide sequence ID" value="NM_001381423.2"/>
</dbReference>
<dbReference type="RefSeq" id="NP_001370451.1">
    <molecule id="P81299-2"/>
    <property type="nucleotide sequence ID" value="NM_001383840.2"/>
</dbReference>
<dbReference type="RefSeq" id="NP_001379687.1">
    <molecule id="P81299-4"/>
    <property type="nucleotide sequence ID" value="NM_001393076.1"/>
</dbReference>
<dbReference type="RefSeq" id="NP_495085.2">
    <property type="nucleotide sequence ID" value="NM_062684.5"/>
</dbReference>
<dbReference type="RefSeq" id="NP_495086.1">
    <property type="nucleotide sequence ID" value="NM_062685.3"/>
</dbReference>
<dbReference type="RefSeq" id="NP_740991.1">
    <property type="nucleotide sequence ID" value="NM_170993.4"/>
</dbReference>
<dbReference type="SMR" id="P81299"/>
<dbReference type="BioGRID" id="39287">
    <property type="interactions" value="8"/>
</dbReference>
<dbReference type="DIP" id="DIP-25903N"/>
<dbReference type="FunCoup" id="P81299">
    <property type="interactions" value="2145"/>
</dbReference>
<dbReference type="STRING" id="6239.C17G10.4h.1"/>
<dbReference type="iPTMnet" id="P81299"/>
<dbReference type="PaxDb" id="6239-C17G10.4b.2"/>
<dbReference type="PeptideAtlas" id="P81299"/>
<dbReference type="EnsemblMetazoa" id="C17G10.4a.1">
    <molecule id="P81299-2"/>
    <property type="protein sequence ID" value="C17G10.4a.1"/>
    <property type="gene ID" value="WBGene00000383"/>
</dbReference>
<dbReference type="EnsemblMetazoa" id="C17G10.4c.1">
    <molecule id="P81299-3"/>
    <property type="protein sequence ID" value="C17G10.4c.1"/>
    <property type="gene ID" value="WBGene00000383"/>
</dbReference>
<dbReference type="EnsemblMetazoa" id="C17G10.4d.1">
    <molecule id="P81299-4"/>
    <property type="protein sequence ID" value="C17G10.4d.1"/>
    <property type="gene ID" value="WBGene00000383"/>
</dbReference>
<dbReference type="EnsemblMetazoa" id="C17G10.4e.1">
    <molecule id="P81299-5"/>
    <property type="protein sequence ID" value="C17G10.4e.1"/>
    <property type="gene ID" value="WBGene00000383"/>
</dbReference>
<dbReference type="EnsemblMetazoa" id="C17G10.4g.1">
    <molecule id="P81299-7"/>
    <property type="protein sequence ID" value="C17G10.4g.1"/>
    <property type="gene ID" value="WBGene00000383"/>
</dbReference>
<dbReference type="EnsemblMetazoa" id="C17G10.4h.1">
    <molecule id="P81299-1"/>
    <property type="protein sequence ID" value="C17G10.4h.1"/>
    <property type="gene ID" value="WBGene00000383"/>
</dbReference>
<dbReference type="GeneID" id="173945"/>
<dbReference type="KEGG" id="cel:CELE_C17G10.4"/>
<dbReference type="UCSC" id="C17G10.4b">
    <molecule id="P81299-1"/>
    <property type="organism name" value="c. elegans"/>
</dbReference>
<dbReference type="AGR" id="WB:WBGene00000383"/>
<dbReference type="CTD" id="173945"/>
<dbReference type="WormBase" id="C17G10.4a">
    <molecule id="P81299-2"/>
    <property type="protein sequence ID" value="CE30868"/>
    <property type="gene ID" value="WBGene00000383"/>
    <property type="gene designation" value="cdc-14"/>
</dbReference>
<dbReference type="WormBase" id="C17G10.4c">
    <molecule id="P81299-3"/>
    <property type="protein sequence ID" value="CE08288"/>
    <property type="gene ID" value="WBGene00000383"/>
    <property type="gene designation" value="cdc-14"/>
</dbReference>
<dbReference type="WormBase" id="C17G10.4d">
    <molecule id="P81299-4"/>
    <property type="protein sequence ID" value="CE06845"/>
    <property type="gene ID" value="WBGene00000383"/>
    <property type="gene designation" value="cdc-14"/>
</dbReference>
<dbReference type="WormBase" id="C17G10.4e">
    <molecule id="P81299-5"/>
    <property type="protein sequence ID" value="CE36916"/>
    <property type="gene ID" value="WBGene00000383"/>
    <property type="gene designation" value="cdc-14"/>
</dbReference>
<dbReference type="WormBase" id="C17G10.4g">
    <molecule id="P81299-7"/>
    <property type="protein sequence ID" value="CE50122"/>
    <property type="gene ID" value="WBGene00000383"/>
    <property type="gene designation" value="cdc-14"/>
</dbReference>
<dbReference type="WormBase" id="C17G10.4h">
    <molecule id="P81299-1"/>
    <property type="protein sequence ID" value="CE01789"/>
    <property type="gene ID" value="WBGene00000383"/>
    <property type="gene designation" value="cdc-14"/>
</dbReference>
<dbReference type="eggNOG" id="KOG1720">
    <property type="taxonomic scope" value="Eukaryota"/>
</dbReference>
<dbReference type="GeneTree" id="ENSGT00940000170847"/>
<dbReference type="HOGENOM" id="CLU_288890_0_0_1"/>
<dbReference type="InParanoid" id="P81299"/>
<dbReference type="OMA" id="MQKFCWS"/>
<dbReference type="OrthoDB" id="266663at2759"/>
<dbReference type="Reactome" id="R-CEL-5687128">
    <property type="pathway name" value="MAPK6/MAPK4 signaling"/>
</dbReference>
<dbReference type="PRO" id="PR:P81299"/>
<dbReference type="Proteomes" id="UP000001940">
    <property type="component" value="Chromosome II"/>
</dbReference>
<dbReference type="Bgee" id="WBGene00000383">
    <property type="expression patterns" value="Expressed in embryo and 4 other cell types or tissues"/>
</dbReference>
<dbReference type="GO" id="GO:0000235">
    <property type="term" value="C:astral microtubule"/>
    <property type="evidence" value="ECO:0000314"/>
    <property type="project" value="WormBase"/>
</dbReference>
<dbReference type="GO" id="GO:0005813">
    <property type="term" value="C:centrosome"/>
    <property type="evidence" value="ECO:0000314"/>
    <property type="project" value="WormBase"/>
</dbReference>
<dbReference type="GO" id="GO:0005737">
    <property type="term" value="C:cytoplasm"/>
    <property type="evidence" value="ECO:0000314"/>
    <property type="project" value="UniProtKB"/>
</dbReference>
<dbReference type="GO" id="GO:1902636">
    <property type="term" value="C:kinociliary basal body"/>
    <property type="evidence" value="ECO:0000318"/>
    <property type="project" value="GO_Central"/>
</dbReference>
<dbReference type="GO" id="GO:0030496">
    <property type="term" value="C:midbody"/>
    <property type="evidence" value="ECO:0000314"/>
    <property type="project" value="WormBase"/>
</dbReference>
<dbReference type="GO" id="GO:0072686">
    <property type="term" value="C:mitotic spindle"/>
    <property type="evidence" value="ECO:0000318"/>
    <property type="project" value="GO_Central"/>
</dbReference>
<dbReference type="GO" id="GO:1990023">
    <property type="term" value="C:mitotic spindle midzone"/>
    <property type="evidence" value="ECO:0000314"/>
    <property type="project" value="WormBase"/>
</dbReference>
<dbReference type="GO" id="GO:0005730">
    <property type="term" value="C:nucleolus"/>
    <property type="evidence" value="ECO:0000314"/>
    <property type="project" value="WormBase"/>
</dbReference>
<dbReference type="GO" id="GO:0005634">
    <property type="term" value="C:nucleus"/>
    <property type="evidence" value="ECO:0000314"/>
    <property type="project" value="UniProtKB"/>
</dbReference>
<dbReference type="GO" id="GO:0005819">
    <property type="term" value="C:spindle"/>
    <property type="evidence" value="ECO:0000314"/>
    <property type="project" value="UniProtKB"/>
</dbReference>
<dbReference type="GO" id="GO:0051233">
    <property type="term" value="C:spindle midzone"/>
    <property type="evidence" value="ECO:0000314"/>
    <property type="project" value="WormBase"/>
</dbReference>
<dbReference type="GO" id="GO:0000922">
    <property type="term" value="C:spindle pole"/>
    <property type="evidence" value="ECO:0000318"/>
    <property type="project" value="GO_Central"/>
</dbReference>
<dbReference type="GO" id="GO:0016791">
    <property type="term" value="F:phosphatase activity"/>
    <property type="evidence" value="ECO:0000314"/>
    <property type="project" value="WormBase"/>
</dbReference>
<dbReference type="GO" id="GO:0004721">
    <property type="term" value="F:phosphoprotein phosphatase activity"/>
    <property type="evidence" value="ECO:0000314"/>
    <property type="project" value="WormBase"/>
</dbReference>
<dbReference type="GO" id="GO:0004722">
    <property type="term" value="F:protein serine/threonine phosphatase activity"/>
    <property type="evidence" value="ECO:0000318"/>
    <property type="project" value="GO_Central"/>
</dbReference>
<dbReference type="GO" id="GO:0004725">
    <property type="term" value="F:protein tyrosine phosphatase activity"/>
    <property type="evidence" value="ECO:0000318"/>
    <property type="project" value="GO_Central"/>
</dbReference>
<dbReference type="GO" id="GO:0060271">
    <property type="term" value="P:cilium assembly"/>
    <property type="evidence" value="ECO:0000318"/>
    <property type="project" value="GO_Central"/>
</dbReference>
<dbReference type="GO" id="GO:0016311">
    <property type="term" value="P:dephosphorylation"/>
    <property type="evidence" value="ECO:0000314"/>
    <property type="project" value="WormBase"/>
</dbReference>
<dbReference type="GO" id="GO:0000226">
    <property type="term" value="P:microtubule cytoskeleton organization"/>
    <property type="evidence" value="ECO:0000315"/>
    <property type="project" value="UniProtKB"/>
</dbReference>
<dbReference type="GO" id="GO:0000281">
    <property type="term" value="P:mitotic cytokinesis"/>
    <property type="evidence" value="ECO:0000315"/>
    <property type="project" value="WormBase"/>
</dbReference>
<dbReference type="GO" id="GO:0051256">
    <property type="term" value="P:mitotic spindle midzone assembly"/>
    <property type="evidence" value="ECO:0000315"/>
    <property type="project" value="WormBase"/>
</dbReference>
<dbReference type="GO" id="GO:0045786">
    <property type="term" value="P:negative regulation of cell cycle"/>
    <property type="evidence" value="ECO:0000314"/>
    <property type="project" value="UniProtKB"/>
</dbReference>
<dbReference type="GO" id="GO:1902807">
    <property type="term" value="P:negative regulation of cell cycle G1/S phase transition"/>
    <property type="evidence" value="ECO:0000315"/>
    <property type="project" value="UniProtKB"/>
</dbReference>
<dbReference type="GO" id="GO:0040038">
    <property type="term" value="P:polar body extrusion after meiotic divisions"/>
    <property type="evidence" value="ECO:0000315"/>
    <property type="project" value="WormBase"/>
</dbReference>
<dbReference type="GO" id="GO:0032467">
    <property type="term" value="P:positive regulation of cytokinesis"/>
    <property type="evidence" value="ECO:0000318"/>
    <property type="project" value="GO_Central"/>
</dbReference>
<dbReference type="GO" id="GO:1903452">
    <property type="term" value="P:positive regulation of G1 to G0 transition"/>
    <property type="evidence" value="ECO:0000315"/>
    <property type="project" value="WormBase"/>
</dbReference>
<dbReference type="GO" id="GO:0060284">
    <property type="term" value="P:regulation of cell development"/>
    <property type="evidence" value="ECO:0000315"/>
    <property type="project" value="UniProtKB"/>
</dbReference>
<dbReference type="GO" id="GO:0007096">
    <property type="term" value="P:regulation of exit from mitosis"/>
    <property type="evidence" value="ECO:0000318"/>
    <property type="project" value="GO_Central"/>
</dbReference>
<dbReference type="GO" id="GO:0040028">
    <property type="term" value="P:regulation of vulval development"/>
    <property type="evidence" value="ECO:0000315"/>
    <property type="project" value="UniProtKB"/>
</dbReference>
<dbReference type="CDD" id="cd14499">
    <property type="entry name" value="CDC14_C"/>
    <property type="match status" value="1"/>
</dbReference>
<dbReference type="CDD" id="cd17657">
    <property type="entry name" value="CDC14_N"/>
    <property type="match status" value="1"/>
</dbReference>
<dbReference type="FunFam" id="3.90.190.10:FF:000006">
    <property type="entry name" value="Dual specificity protein phosphatase CDC14B"/>
    <property type="match status" value="1"/>
</dbReference>
<dbReference type="Gene3D" id="3.90.190.10">
    <property type="entry name" value="Protein tyrosine phosphatase superfamily"/>
    <property type="match status" value="2"/>
</dbReference>
<dbReference type="InterPro" id="IPR044506">
    <property type="entry name" value="CDC14_C"/>
</dbReference>
<dbReference type="InterPro" id="IPR029260">
    <property type="entry name" value="DSPn"/>
</dbReference>
<dbReference type="InterPro" id="IPR029021">
    <property type="entry name" value="Prot-tyrosine_phosphatase-like"/>
</dbReference>
<dbReference type="InterPro" id="IPR050561">
    <property type="entry name" value="PTP"/>
</dbReference>
<dbReference type="InterPro" id="IPR016130">
    <property type="entry name" value="Tyr_Pase_AS"/>
</dbReference>
<dbReference type="InterPro" id="IPR000387">
    <property type="entry name" value="Tyr_Pase_dom"/>
</dbReference>
<dbReference type="InterPro" id="IPR020422">
    <property type="entry name" value="TYR_PHOSPHATASE_DUAL_dom"/>
</dbReference>
<dbReference type="PANTHER" id="PTHR23339">
    <property type="entry name" value="TYROSINE SPECIFIC PROTEIN PHOSPHATASE AND DUAL SPECIFICITY PROTEIN PHOSPHATASE"/>
    <property type="match status" value="1"/>
</dbReference>
<dbReference type="Pfam" id="PF14671">
    <property type="entry name" value="DSPn"/>
    <property type="match status" value="1"/>
</dbReference>
<dbReference type="Pfam" id="PF22785">
    <property type="entry name" value="Tc-R-P"/>
    <property type="match status" value="1"/>
</dbReference>
<dbReference type="SMART" id="SM00195">
    <property type="entry name" value="DSPc"/>
    <property type="match status" value="1"/>
</dbReference>
<dbReference type="SUPFAM" id="SSF52799">
    <property type="entry name" value="(Phosphotyrosine protein) phosphatases II"/>
    <property type="match status" value="2"/>
</dbReference>
<dbReference type="PROSITE" id="PS00383">
    <property type="entry name" value="TYR_PHOSPHATASE_1"/>
    <property type="match status" value="1"/>
</dbReference>
<dbReference type="PROSITE" id="PS50056">
    <property type="entry name" value="TYR_PHOSPHATASE_2"/>
    <property type="match status" value="1"/>
</dbReference>
<dbReference type="PROSITE" id="PS50054">
    <property type="entry name" value="TYR_PHOSPHATASE_DUAL"/>
    <property type="match status" value="1"/>
</dbReference>
<evidence type="ECO:0000255" key="1">
    <source>
        <dbReference type="PROSITE-ProRule" id="PRU00160"/>
    </source>
</evidence>
<evidence type="ECO:0000255" key="2">
    <source>
        <dbReference type="PROSITE-ProRule" id="PRU10044"/>
    </source>
</evidence>
<evidence type="ECO:0000256" key="3">
    <source>
        <dbReference type="SAM" id="MobiDB-lite"/>
    </source>
</evidence>
<evidence type="ECO:0000269" key="4">
    <source>
    </source>
</evidence>
<evidence type="ECO:0000269" key="5">
    <source>
    </source>
</evidence>
<evidence type="ECO:0000269" key="6">
    <source>
    </source>
</evidence>
<evidence type="ECO:0000303" key="7">
    <source>
    </source>
</evidence>
<evidence type="ECO:0000303" key="8">
    <source>
    </source>
</evidence>
<evidence type="ECO:0000305" key="9"/>
<evidence type="ECO:0000312" key="10">
    <source>
        <dbReference type="WormBase" id="C17G10.4a"/>
    </source>
</evidence>
<evidence type="ECO:0000312" key="11">
    <source>
        <dbReference type="WormBase" id="C17G10.4c"/>
    </source>
</evidence>
<evidence type="ECO:0000312" key="12">
    <source>
        <dbReference type="WormBase" id="C17G10.4d"/>
    </source>
</evidence>
<evidence type="ECO:0000312" key="13">
    <source>
        <dbReference type="WormBase" id="C17G10.4e"/>
    </source>
</evidence>
<evidence type="ECO:0000312" key="14">
    <source>
        <dbReference type="WormBase" id="C17G10.4g"/>
    </source>
</evidence>
<evidence type="ECO:0000312" key="15">
    <source>
        <dbReference type="WormBase" id="C17G10.4h"/>
    </source>
</evidence>
<accession>P81299</accession>
<accession>A0A0K3AQY3</accession>
<accession>A0A0K3ATW0</accession>
<accession>P81300</accession>
<accession>Q09955</accession>
<accession>Q09976</accession>
<accession>Q6DLY2</accession>
<accession>Q6DLY3</accession>
<accession>Q6DLY4</accession>
<accession>Q6DLY5</accession>
<accession>Q6DLY6</accession>
<accession>Q8MQD6</accession>
<comment type="function">
    <text evidence="4 5 6">Protein phosphatase that negatively regulates the G1-to-S phase transition to inhibit the cell cycle and establish quiescence in cells of multiple lineages including vulval, hypodermal and intestinal (PubMed:15247923, PubMed:21723944). Promotes nuclear accumulation and activity of the cyclin-dependent kinase inhibitor cki-1 which leads to inhibition of G1 progression during vulval tissue development (PubMed:15247923). Has been shown to not be required for cytokinesis (PubMed:15247923). However, in the embryo, in a contrasting study, has been shown to act as a regulator of central spindle formation and cytokinesis, and may be required for localization of the spindle component zen-4, and its interacting partner air-2 at the spindle during late cell divisions (PubMed:12213836).</text>
</comment>
<comment type="function">
    <molecule>Isoform c</molecule>
    <text evidence="6">Main regulator of cell cycle arrest in vulval precursor cells.</text>
</comment>
<comment type="catalytic activity">
    <reaction evidence="2 4">
        <text>O-phospho-L-tyrosyl-[protein] + H2O = L-tyrosyl-[protein] + phosphate</text>
        <dbReference type="Rhea" id="RHEA:10684"/>
        <dbReference type="Rhea" id="RHEA-COMP:10136"/>
        <dbReference type="Rhea" id="RHEA-COMP:20101"/>
        <dbReference type="ChEBI" id="CHEBI:15377"/>
        <dbReference type="ChEBI" id="CHEBI:43474"/>
        <dbReference type="ChEBI" id="CHEBI:46858"/>
        <dbReference type="ChEBI" id="CHEBI:61978"/>
        <dbReference type="EC" id="3.1.3.48"/>
    </reaction>
</comment>
<comment type="activity regulation">
    <text evidence="4">Inhibited by sodium orthovanadate. Weakly inhibited by sodium fluoride and okadaic acid.</text>
</comment>
<comment type="subcellular location">
    <subcellularLocation>
        <location evidence="4 5">Cytoplasm</location>
    </subcellularLocation>
    <subcellularLocation>
        <location evidence="5">Cytoplasm</location>
        <location evidence="5">Cytoskeleton</location>
        <location evidence="5">Microtubule organizing center</location>
        <location evidence="5">Centrosome</location>
    </subcellularLocation>
    <subcellularLocation>
        <location evidence="4 5">Cytoplasm</location>
        <location evidence="4 5">Cytoskeleton</location>
        <location evidence="4 5">Spindle</location>
    </subcellularLocation>
    <subcellularLocation>
        <location evidence="4">Midbody</location>
    </subcellularLocation>
    <subcellularLocation>
        <location evidence="5">Nucleus</location>
    </subcellularLocation>
    <text evidence="4 5">Localizes to the cytoplasm throughout interphase (PubMed:15247923). As cells enter prophase, accumulates at the centrosomes (PubMed:15247923). During metaphase and anaphase, localizes to the spindle, in particular spindle asters and the spindle mid zone (PubMed:12213836, PubMed:15247923). During late telophase, localizes to cytoplasmic aggregates (PubMed:15247923). In some studies, localizes to the midbody during late telophase (PubMed:12213836). Localizes to the cytoplasm in G1-arrested cells (PubMed:15247923). Localizes to the nucleus or nucleolus in postmitotic cells (PubMed:15247923). Some studies report no localization to centrosomes or nuclei (PubMed:12213836). Co-localizes with zen-4 at the spindle, and localization may be dependent on each other (PubMed:12213836).</text>
</comment>
<comment type="subcellular location">
    <molecule>Isoform c</molecule>
    <subcellularLocation>
        <location evidence="6">Cytoplasm</location>
    </subcellularLocation>
    <subcellularLocation>
        <location evidence="6">Nucleus</location>
    </subcellularLocation>
    <text evidence="6">Localizes to the cytoplasm during interphase, but localizes to the nucleus during cell cycle arrest.</text>
</comment>
<comment type="alternative products">
    <event type="alternative splicing"/>
    <isoform>
        <id>P81299-1</id>
        <name evidence="15">h</name>
        <sequence type="displayed"/>
    </isoform>
    <isoform>
        <id>P81299-2</id>
        <name evidence="10">a</name>
        <sequence type="described" ref="VSP_059807 VSP_059811"/>
    </isoform>
    <isoform>
        <id>P81299-3</id>
        <name evidence="11">c</name>
        <sequence type="described" ref="VSP_059807 VSP_059808"/>
    </isoform>
    <isoform>
        <id>P81299-4</id>
        <name evidence="12">d</name>
        <sequence type="described" ref="VSP_059807"/>
    </isoform>
    <isoform>
        <id>P81299-5</id>
        <name evidence="13">e</name>
        <sequence type="described" ref="VSP_059811"/>
    </isoform>
    <isoform>
        <id>P81299-7</id>
        <name evidence="14">g</name>
        <sequence type="described" ref="VSP_059809 VSP_059810"/>
    </isoform>
</comment>
<comment type="developmental stage">
    <text evidence="6">Expressed in the soma during early embryogenesis, and widely expressed after hatching. Isoform C: Expressed in the soma during early embryogenesis, but after hatching, expression in larvae is restricted to V and P lineages, the postembryonic lineages that contribute to the seam cells and vulval precursor cells, respectively.</text>
</comment>
<comment type="disruption phenotype">
    <text evidence="4 5 6">RNAi-mediated knockdown results in extra cell divisions in the vulval lineage, but does not result in defects in cytokinesis (PubMed:15247923, PubMed:21723944). RNAi-mediated knockdown decreases cki-1 expression in the nucleus of vulval precursor cells (PubMed:15247923). In contrasting studies RNAi-mediated knockdown results in embryonic lethality with the production of multinucleated embryos that exhibit cytokinesis failure during telophase, no central spindle formation, and failed localization of the spindle component zen-4 and its interacting partner air-2 at the spindle in either anaphase or telophase (PubMed:12213836).</text>
</comment>
<comment type="similarity">
    <text evidence="9">Belongs to the protein-tyrosine phosphatase family. Non-receptor class CDC14 subfamily.</text>
</comment>
<comment type="caution">
    <text evidence="4 5">Has been shown in one report to not be localized to centrosomes or nuclei, and based on RNAi-mediated knockdown studies, has been shown to play a role in cytokinesis (PubMed:12213836). However, has also been reported to localize to centrosomes and nuclei and to have no role in cytokinesis, based on results obtained using the cdc-14 he118 mutant and RNAi-mediated knockdown (PubMed:15247923).</text>
</comment>
<comment type="sequence caution" evidence="9">
    <conflict type="miscellaneous discrepancy">
        <sequence resource="EMBL-CDS" id="AAT74543"/>
    </conflict>
</comment>